<proteinExistence type="inferred from homology"/>
<keyword id="KW-0067">ATP-binding</keyword>
<keyword id="KW-0436">Ligase</keyword>
<keyword id="KW-0547">Nucleotide-binding</keyword>
<keyword id="KW-0648">Protein biosynthesis</keyword>
<dbReference type="EC" id="6.3.5.7" evidence="1"/>
<dbReference type="EMBL" id="CP000463">
    <property type="protein sequence ID" value="ABJ07290.1"/>
    <property type="molecule type" value="Genomic_DNA"/>
</dbReference>
<dbReference type="SMR" id="Q07L94"/>
<dbReference type="STRING" id="316055.RPE_3358"/>
<dbReference type="KEGG" id="rpe:RPE_3358"/>
<dbReference type="eggNOG" id="COG0154">
    <property type="taxonomic scope" value="Bacteria"/>
</dbReference>
<dbReference type="HOGENOM" id="CLU_009600_0_3_5"/>
<dbReference type="OrthoDB" id="9811471at2"/>
<dbReference type="GO" id="GO:0030956">
    <property type="term" value="C:glutamyl-tRNA(Gln) amidotransferase complex"/>
    <property type="evidence" value="ECO:0007669"/>
    <property type="project" value="InterPro"/>
</dbReference>
<dbReference type="GO" id="GO:0005524">
    <property type="term" value="F:ATP binding"/>
    <property type="evidence" value="ECO:0007669"/>
    <property type="project" value="UniProtKB-KW"/>
</dbReference>
<dbReference type="GO" id="GO:0050567">
    <property type="term" value="F:glutaminyl-tRNA synthase (glutamine-hydrolyzing) activity"/>
    <property type="evidence" value="ECO:0007669"/>
    <property type="project" value="UniProtKB-UniRule"/>
</dbReference>
<dbReference type="GO" id="GO:0006412">
    <property type="term" value="P:translation"/>
    <property type="evidence" value="ECO:0007669"/>
    <property type="project" value="UniProtKB-UniRule"/>
</dbReference>
<dbReference type="Gene3D" id="3.90.1300.10">
    <property type="entry name" value="Amidase signature (AS) domain"/>
    <property type="match status" value="1"/>
</dbReference>
<dbReference type="HAMAP" id="MF_00120">
    <property type="entry name" value="GatA"/>
    <property type="match status" value="1"/>
</dbReference>
<dbReference type="InterPro" id="IPR000120">
    <property type="entry name" value="Amidase"/>
</dbReference>
<dbReference type="InterPro" id="IPR020556">
    <property type="entry name" value="Amidase_CS"/>
</dbReference>
<dbReference type="InterPro" id="IPR023631">
    <property type="entry name" value="Amidase_dom"/>
</dbReference>
<dbReference type="InterPro" id="IPR036928">
    <property type="entry name" value="AS_sf"/>
</dbReference>
<dbReference type="InterPro" id="IPR004412">
    <property type="entry name" value="GatA"/>
</dbReference>
<dbReference type="NCBIfam" id="TIGR00132">
    <property type="entry name" value="gatA"/>
    <property type="match status" value="1"/>
</dbReference>
<dbReference type="PANTHER" id="PTHR11895:SF151">
    <property type="entry name" value="GLUTAMYL-TRNA(GLN) AMIDOTRANSFERASE SUBUNIT A"/>
    <property type="match status" value="1"/>
</dbReference>
<dbReference type="PANTHER" id="PTHR11895">
    <property type="entry name" value="TRANSAMIDASE"/>
    <property type="match status" value="1"/>
</dbReference>
<dbReference type="Pfam" id="PF01425">
    <property type="entry name" value="Amidase"/>
    <property type="match status" value="1"/>
</dbReference>
<dbReference type="SUPFAM" id="SSF75304">
    <property type="entry name" value="Amidase signature (AS) enzymes"/>
    <property type="match status" value="1"/>
</dbReference>
<dbReference type="PROSITE" id="PS00571">
    <property type="entry name" value="AMIDASES"/>
    <property type="match status" value="1"/>
</dbReference>
<evidence type="ECO:0000255" key="1">
    <source>
        <dbReference type="HAMAP-Rule" id="MF_00120"/>
    </source>
</evidence>
<gene>
    <name evidence="1" type="primary">gatA</name>
    <name type="ordered locus">RPE_3358</name>
</gene>
<organism>
    <name type="scientific">Rhodopseudomonas palustris (strain BisA53)</name>
    <dbReference type="NCBI Taxonomy" id="316055"/>
    <lineage>
        <taxon>Bacteria</taxon>
        <taxon>Pseudomonadati</taxon>
        <taxon>Pseudomonadota</taxon>
        <taxon>Alphaproteobacteria</taxon>
        <taxon>Hyphomicrobiales</taxon>
        <taxon>Nitrobacteraceae</taxon>
        <taxon>Rhodopseudomonas</taxon>
    </lineage>
</organism>
<feature type="chain" id="PRO_1000015893" description="Glutamyl-tRNA(Gln) amidotransferase subunit A">
    <location>
        <begin position="1"/>
        <end position="492"/>
    </location>
</feature>
<feature type="active site" description="Charge relay system" evidence="1">
    <location>
        <position position="78"/>
    </location>
</feature>
<feature type="active site" description="Charge relay system" evidence="1">
    <location>
        <position position="158"/>
    </location>
</feature>
<feature type="active site" description="Acyl-ester intermediate" evidence="1">
    <location>
        <position position="182"/>
    </location>
</feature>
<accession>Q07L94</accession>
<comment type="function">
    <text evidence="1">Allows the formation of correctly charged Gln-tRNA(Gln) through the transamidation of misacylated Glu-tRNA(Gln) in organisms which lack glutaminyl-tRNA synthetase. The reaction takes place in the presence of glutamine and ATP through an activated gamma-phospho-Glu-tRNA(Gln).</text>
</comment>
<comment type="catalytic activity">
    <reaction evidence="1">
        <text>L-glutamyl-tRNA(Gln) + L-glutamine + ATP + H2O = L-glutaminyl-tRNA(Gln) + L-glutamate + ADP + phosphate + H(+)</text>
        <dbReference type="Rhea" id="RHEA:17521"/>
        <dbReference type="Rhea" id="RHEA-COMP:9681"/>
        <dbReference type="Rhea" id="RHEA-COMP:9684"/>
        <dbReference type="ChEBI" id="CHEBI:15377"/>
        <dbReference type="ChEBI" id="CHEBI:15378"/>
        <dbReference type="ChEBI" id="CHEBI:29985"/>
        <dbReference type="ChEBI" id="CHEBI:30616"/>
        <dbReference type="ChEBI" id="CHEBI:43474"/>
        <dbReference type="ChEBI" id="CHEBI:58359"/>
        <dbReference type="ChEBI" id="CHEBI:78520"/>
        <dbReference type="ChEBI" id="CHEBI:78521"/>
        <dbReference type="ChEBI" id="CHEBI:456216"/>
        <dbReference type="EC" id="6.3.5.7"/>
    </reaction>
</comment>
<comment type="subunit">
    <text evidence="1">Heterotrimer of A, B and C subunits.</text>
</comment>
<comment type="similarity">
    <text evidence="1">Belongs to the amidase family. GatA subfamily.</text>
</comment>
<name>GATA_RHOP5</name>
<protein>
    <recommendedName>
        <fullName evidence="1">Glutamyl-tRNA(Gln) amidotransferase subunit A</fullName>
        <shortName evidence="1">Glu-ADT subunit A</shortName>
        <ecNumber evidence="1">6.3.5.7</ecNumber>
    </recommendedName>
</protein>
<sequence>MTDLTSLTLAEARDGLAKKSFTALQLTDAHLAAIEAARVLNAYVLETPEQARAMAKAADERIARGAAGPLEGLPLGIKDLFATQGVRTTACSKILGEFSPPYESTVSAQLWRDGAVLLGKLNNDEFAMGSSNETSCFGPVVNPWRREGSDAKLVPGGSSGGSASAVAAGLCLGATATDTGGSIRQPAAFTGTVGIKPTYGRCSRWGIVAFASSLDQAGPIARTVRDAAILLRSMAGHDPKDTTSVDRAVPDYEAAIGRSVKGMKIGIPKEYRIDGMPAEIEALWKQGADWLKAAGAELVEVSLPHTKYALPAYYIVAPAEASSNLARYDGVRYGARVNGRNIVEMYENTRAAGFGAEVKRRIMIGTYVLSAGYYDAYYLRAQKVRTLIKRDFEECFAKGVSAILTPATPSAAFGIGEKGGADPVEMYLNDIFTVTVNMAGLPGIAVPAGKDAQGLPLGLQLIGRPFDEDTLFSLGEVIEQAAGRFTPTKWWA</sequence>
<reference key="1">
    <citation type="submission" date="2006-09" db="EMBL/GenBank/DDBJ databases">
        <title>Complete sequence of Rhodopseudomonas palustris BisA53.</title>
        <authorList>
            <consortium name="US DOE Joint Genome Institute"/>
            <person name="Copeland A."/>
            <person name="Lucas S."/>
            <person name="Lapidus A."/>
            <person name="Barry K."/>
            <person name="Detter J.C."/>
            <person name="Glavina del Rio T."/>
            <person name="Hammon N."/>
            <person name="Israni S."/>
            <person name="Dalin E."/>
            <person name="Tice H."/>
            <person name="Pitluck S."/>
            <person name="Chain P."/>
            <person name="Malfatti S."/>
            <person name="Shin M."/>
            <person name="Vergez L."/>
            <person name="Schmutz J."/>
            <person name="Larimer F."/>
            <person name="Land M."/>
            <person name="Hauser L."/>
            <person name="Pelletier D.A."/>
            <person name="Kyrpides N."/>
            <person name="Kim E."/>
            <person name="Harwood C.S."/>
            <person name="Oda Y."/>
            <person name="Richardson P."/>
        </authorList>
    </citation>
    <scope>NUCLEOTIDE SEQUENCE [LARGE SCALE GENOMIC DNA]</scope>
    <source>
        <strain>BisA53</strain>
    </source>
</reference>